<organism>
    <name type="scientific">Drosophila auraria</name>
    <name type="common">Fruit fly</name>
    <dbReference type="NCBI Taxonomy" id="47315"/>
    <lineage>
        <taxon>Eukaryota</taxon>
        <taxon>Metazoa</taxon>
        <taxon>Ecdysozoa</taxon>
        <taxon>Arthropoda</taxon>
        <taxon>Hexapoda</taxon>
        <taxon>Insecta</taxon>
        <taxon>Pterygota</taxon>
        <taxon>Neoptera</taxon>
        <taxon>Endopterygota</taxon>
        <taxon>Diptera</taxon>
        <taxon>Brachycera</taxon>
        <taxon>Muscomorpha</taxon>
        <taxon>Ephydroidea</taxon>
        <taxon>Drosophilidae</taxon>
        <taxon>Drosophila</taxon>
        <taxon>Sophophora</taxon>
    </lineage>
</organism>
<feature type="chain" id="PRO_0000062929" description="Heat shock protein 83">
    <location>
        <begin position="1"/>
        <end position="716"/>
    </location>
</feature>
<feature type="region of interest" description="Disordered" evidence="2">
    <location>
        <begin position="213"/>
        <end position="262"/>
    </location>
</feature>
<feature type="region of interest" description="Disordered" evidence="2">
    <location>
        <begin position="687"/>
        <end position="716"/>
    </location>
</feature>
<feature type="short sequence motif" description="TPR repeat-binding">
    <location>
        <begin position="712"/>
        <end position="716"/>
    </location>
</feature>
<feature type="compositionally biased region" description="Basic and acidic residues" evidence="2">
    <location>
        <begin position="225"/>
        <end position="244"/>
    </location>
</feature>
<feature type="binding site" evidence="1">
    <location>
        <position position="39"/>
    </location>
    <ligand>
        <name>ATP</name>
        <dbReference type="ChEBI" id="CHEBI:30616"/>
    </ligand>
</feature>
<feature type="binding site" evidence="1">
    <location>
        <position position="81"/>
    </location>
    <ligand>
        <name>ATP</name>
        <dbReference type="ChEBI" id="CHEBI:30616"/>
    </ligand>
</feature>
<feature type="binding site" evidence="1">
    <location>
        <position position="100"/>
    </location>
    <ligand>
        <name>ATP</name>
        <dbReference type="ChEBI" id="CHEBI:30616"/>
    </ligand>
</feature>
<feature type="binding site" evidence="1">
    <location>
        <position position="126"/>
    </location>
    <ligand>
        <name>ATP</name>
        <dbReference type="ChEBI" id="CHEBI:30616"/>
    </ligand>
</feature>
<feature type="binding site" evidence="1">
    <location>
        <position position="384"/>
    </location>
    <ligand>
        <name>ATP</name>
        <dbReference type="ChEBI" id="CHEBI:30616"/>
    </ligand>
</feature>
<feature type="modified residue" description="Phosphoserine" evidence="1">
    <location>
        <position position="219"/>
    </location>
</feature>
<protein>
    <recommendedName>
        <fullName>Heat shock protein 83</fullName>
    </recommendedName>
    <alternativeName>
        <fullName>HSP 82</fullName>
    </alternativeName>
</protein>
<gene>
    <name type="primary">Hsp83</name>
    <name type="synonym">Hsp82</name>
</gene>
<keyword id="KW-0067">ATP-binding</keyword>
<keyword id="KW-0143">Chaperone</keyword>
<keyword id="KW-0963">Cytoplasm</keyword>
<keyword id="KW-0547">Nucleotide-binding</keyword>
<keyword id="KW-0597">Phosphoprotein</keyword>
<keyword id="KW-0346">Stress response</keyword>
<evidence type="ECO:0000250" key="1"/>
<evidence type="ECO:0000256" key="2">
    <source>
        <dbReference type="SAM" id="MobiDB-lite"/>
    </source>
</evidence>
<evidence type="ECO:0000305" key="3"/>
<name>HSP83_DROAV</name>
<comment type="function">
    <text evidence="1">Molecular chaperone that promotes the maturation, structural maintenance and proper regulation of specific target proteins involved for instance in cell cycle control and signal transduction. Undergoes a functional cycle that is linked to its ATPase activity. This cycle probably induces conformational changes in the client proteins, thereby causing their activation. Interacts dynamically with various co-chaperones that modulate its substrate recognition, ATPase cycle and chaperone function. Required for piRNA biogenesis by facilitating loading of piRNAs into PIWI proteins (By similarity).</text>
</comment>
<comment type="subunit">
    <text evidence="1">Homodimer. Interacts with shu (By similarity).</text>
</comment>
<comment type="subcellular location">
    <subcellularLocation>
        <location>Cytoplasm</location>
    </subcellularLocation>
</comment>
<comment type="domain">
    <text evidence="1">The TPR repeat-binding motif mediates interaction with TPR repeat-containing proteins.</text>
</comment>
<comment type="similarity">
    <text evidence="3">Belongs to the heat shock protein 90 family.</text>
</comment>
<proteinExistence type="inferred from homology"/>
<dbReference type="EMBL" id="U75687">
    <property type="protein sequence ID" value="AAB58358.1"/>
    <property type="molecule type" value="Genomic_DNA"/>
</dbReference>
<dbReference type="SMR" id="O02192"/>
<dbReference type="GO" id="GO:0005737">
    <property type="term" value="C:cytoplasm"/>
    <property type="evidence" value="ECO:0007669"/>
    <property type="project" value="UniProtKB-SubCell"/>
</dbReference>
<dbReference type="GO" id="GO:0005524">
    <property type="term" value="F:ATP binding"/>
    <property type="evidence" value="ECO:0007669"/>
    <property type="project" value="UniProtKB-KW"/>
</dbReference>
<dbReference type="GO" id="GO:0016887">
    <property type="term" value="F:ATP hydrolysis activity"/>
    <property type="evidence" value="ECO:0007669"/>
    <property type="project" value="InterPro"/>
</dbReference>
<dbReference type="GO" id="GO:0140662">
    <property type="term" value="F:ATP-dependent protein folding chaperone"/>
    <property type="evidence" value="ECO:0007669"/>
    <property type="project" value="InterPro"/>
</dbReference>
<dbReference type="GO" id="GO:0051082">
    <property type="term" value="F:unfolded protein binding"/>
    <property type="evidence" value="ECO:0007669"/>
    <property type="project" value="InterPro"/>
</dbReference>
<dbReference type="CDD" id="cd16927">
    <property type="entry name" value="HATPase_Hsp90-like"/>
    <property type="match status" value="1"/>
</dbReference>
<dbReference type="FunFam" id="1.20.120.790:FF:000001">
    <property type="entry name" value="Heat shock protein 90 alpha"/>
    <property type="match status" value="1"/>
</dbReference>
<dbReference type="FunFam" id="3.30.230.80:FF:000001">
    <property type="entry name" value="Heat shock protein 90 alpha"/>
    <property type="match status" value="1"/>
</dbReference>
<dbReference type="FunFam" id="3.40.50.11260:FF:000001">
    <property type="entry name" value="Heat shock protein 90 alpha"/>
    <property type="match status" value="1"/>
</dbReference>
<dbReference type="FunFam" id="3.30.565.10:FF:000001">
    <property type="entry name" value="Heat shock protein HSP 90-alpha"/>
    <property type="match status" value="1"/>
</dbReference>
<dbReference type="Gene3D" id="3.30.230.80">
    <property type="match status" value="1"/>
</dbReference>
<dbReference type="Gene3D" id="3.40.50.11260">
    <property type="match status" value="1"/>
</dbReference>
<dbReference type="Gene3D" id="1.20.120.790">
    <property type="entry name" value="Heat shock protein 90, C-terminal domain"/>
    <property type="match status" value="1"/>
</dbReference>
<dbReference type="Gene3D" id="3.30.565.10">
    <property type="entry name" value="Histidine kinase-like ATPase, C-terminal domain"/>
    <property type="match status" value="1"/>
</dbReference>
<dbReference type="HAMAP" id="MF_00505">
    <property type="entry name" value="HSP90"/>
    <property type="match status" value="1"/>
</dbReference>
<dbReference type="InterPro" id="IPR036890">
    <property type="entry name" value="HATPase_C_sf"/>
</dbReference>
<dbReference type="InterPro" id="IPR019805">
    <property type="entry name" value="Heat_shock_protein_90_CS"/>
</dbReference>
<dbReference type="InterPro" id="IPR037196">
    <property type="entry name" value="HSP90_C"/>
</dbReference>
<dbReference type="InterPro" id="IPR001404">
    <property type="entry name" value="Hsp90_fam"/>
</dbReference>
<dbReference type="InterPro" id="IPR020575">
    <property type="entry name" value="Hsp90_N"/>
</dbReference>
<dbReference type="InterPro" id="IPR020568">
    <property type="entry name" value="Ribosomal_Su5_D2-typ_SF"/>
</dbReference>
<dbReference type="NCBIfam" id="NF003555">
    <property type="entry name" value="PRK05218.1"/>
    <property type="match status" value="1"/>
</dbReference>
<dbReference type="PANTHER" id="PTHR11528">
    <property type="entry name" value="HEAT SHOCK PROTEIN 90 FAMILY MEMBER"/>
    <property type="match status" value="1"/>
</dbReference>
<dbReference type="Pfam" id="PF13589">
    <property type="entry name" value="HATPase_c_3"/>
    <property type="match status" value="1"/>
</dbReference>
<dbReference type="Pfam" id="PF00183">
    <property type="entry name" value="HSP90"/>
    <property type="match status" value="1"/>
</dbReference>
<dbReference type="PIRSF" id="PIRSF002583">
    <property type="entry name" value="Hsp90"/>
    <property type="match status" value="1"/>
</dbReference>
<dbReference type="PRINTS" id="PR00775">
    <property type="entry name" value="HEATSHOCK90"/>
</dbReference>
<dbReference type="SMART" id="SM00387">
    <property type="entry name" value="HATPase_c"/>
    <property type="match status" value="1"/>
</dbReference>
<dbReference type="SUPFAM" id="SSF55874">
    <property type="entry name" value="ATPase domain of HSP90 chaperone/DNA topoisomerase II/histidine kinase"/>
    <property type="match status" value="1"/>
</dbReference>
<dbReference type="SUPFAM" id="SSF110942">
    <property type="entry name" value="HSP90 C-terminal domain"/>
    <property type="match status" value="1"/>
</dbReference>
<dbReference type="SUPFAM" id="SSF54211">
    <property type="entry name" value="Ribosomal protein S5 domain 2-like"/>
    <property type="match status" value="1"/>
</dbReference>
<dbReference type="PROSITE" id="PS00298">
    <property type="entry name" value="HSP90"/>
    <property type="match status" value="1"/>
</dbReference>
<reference key="1">
    <citation type="journal article" date="1998" name="J. Mol. Evol.">
        <title>The heat-shock gene hsp83 of Drosophila auraria: genomic organization, nucleotide sequence, and long antiparallel coupled ORFs (LAC ORFs).</title>
        <authorList>
            <person name="Konstantopoulou I."/>
            <person name="Scouras Z.G."/>
        </authorList>
    </citation>
    <scope>NUCLEOTIDE SEQUENCE [GENOMIC DNA]</scope>
    <source>
        <strain>3040.11B</strain>
    </source>
</reference>
<accession>O02192</accession>
<sequence length="716" mass="81760">MPEEAETFAFQAEIAQLMSLIINTFYSNKEIFLRELISNASDALDKIRYESLTDPSKLDSGKELYIKLIPNKTAGTLTIIDTGIGMTKSDLVNNLGTIAKSGTKAFMEALQAGADISMIGQFGVGFYSAYLVADKVTVTSKNNDDEQYIWESSAGGSFTVRADNSEPLGRGTKIVLYIKEDQTDYLEESKIKEIVNKHSQFIGYPIKLLVEKEREKEVSDDEADDDKKEDEKKEMDTDEPKIEDVGEDEDADKKDKDAKKKKTIKEKYTEDEELNKTKPIWTRNPDDISQEEYGEFYKSLTNDWEDHLAVKHFSVEGQLEFRALLFIPRRTPFDLFENQKKRNNIKLYVRRVFIMDNCEDLIPEYLNFIKGVVDSEDLPLNISREMLQQNKVLKVIRKNLVKKTMELIEELTEDKENYKKFYDQFSKNLKLGVHEDSNNRAKLADFLRFHTSASGDDFCSLSDYVSRMKENQKHVYFITGESKDQVSNSAFVERVKARGFEVVYMTEPIDEYVIQHLKEYKGKQLVSVTKEGLELPEDDAEKKKREEDKAKFESLCKLMNAILDNKVEKVVVSNRLVDSPCCIVTSQFGWSANMERIMKAQALRDTATMGYMAGKKQLEINPDHPIVETLRQKADADKNDKAVKDLVILLFETSLLSSGFSLDSPQVHASRIYRMIKLGLGIDEDEPMTTEDAQSAGDAPSLVEDTEDASHMEEVD</sequence>